<organism>
    <name type="scientific">Dictyostelium discoideum</name>
    <name type="common">Social amoeba</name>
    <dbReference type="NCBI Taxonomy" id="44689"/>
    <lineage>
        <taxon>Eukaryota</taxon>
        <taxon>Amoebozoa</taxon>
        <taxon>Evosea</taxon>
        <taxon>Eumycetozoa</taxon>
        <taxon>Dictyostelia</taxon>
        <taxon>Dictyosteliales</taxon>
        <taxon>Dictyosteliaceae</taxon>
        <taxon>Dictyostelium</taxon>
    </lineage>
</organism>
<evidence type="ECO:0000250" key="1"/>
<evidence type="ECO:0000255" key="2"/>
<evidence type="ECO:0000305" key="3"/>
<reference key="1">
    <citation type="journal article" date="2005" name="Nature">
        <title>The genome of the social amoeba Dictyostelium discoideum.</title>
        <authorList>
            <person name="Eichinger L."/>
            <person name="Pachebat J.A."/>
            <person name="Gloeckner G."/>
            <person name="Rajandream M.A."/>
            <person name="Sucgang R."/>
            <person name="Berriman M."/>
            <person name="Song J."/>
            <person name="Olsen R."/>
            <person name="Szafranski K."/>
            <person name="Xu Q."/>
            <person name="Tunggal B."/>
            <person name="Kummerfeld S."/>
            <person name="Madera M."/>
            <person name="Konfortov B.A."/>
            <person name="Rivero F."/>
            <person name="Bankier A.T."/>
            <person name="Lehmann R."/>
            <person name="Hamlin N."/>
            <person name="Davies R."/>
            <person name="Gaudet P."/>
            <person name="Fey P."/>
            <person name="Pilcher K."/>
            <person name="Chen G."/>
            <person name="Saunders D."/>
            <person name="Sodergren E.J."/>
            <person name="Davis P."/>
            <person name="Kerhornou A."/>
            <person name="Nie X."/>
            <person name="Hall N."/>
            <person name="Anjard C."/>
            <person name="Hemphill L."/>
            <person name="Bason N."/>
            <person name="Farbrother P."/>
            <person name="Desany B."/>
            <person name="Just E."/>
            <person name="Morio T."/>
            <person name="Rost R."/>
            <person name="Churcher C.M."/>
            <person name="Cooper J."/>
            <person name="Haydock S."/>
            <person name="van Driessche N."/>
            <person name="Cronin A."/>
            <person name="Goodhead I."/>
            <person name="Muzny D.M."/>
            <person name="Mourier T."/>
            <person name="Pain A."/>
            <person name="Lu M."/>
            <person name="Harper D."/>
            <person name="Lindsay R."/>
            <person name="Hauser H."/>
            <person name="James K.D."/>
            <person name="Quiles M."/>
            <person name="Madan Babu M."/>
            <person name="Saito T."/>
            <person name="Buchrieser C."/>
            <person name="Wardroper A."/>
            <person name="Felder M."/>
            <person name="Thangavelu M."/>
            <person name="Johnson D."/>
            <person name="Knights A."/>
            <person name="Loulseged H."/>
            <person name="Mungall K.L."/>
            <person name="Oliver K."/>
            <person name="Price C."/>
            <person name="Quail M.A."/>
            <person name="Urushihara H."/>
            <person name="Hernandez J."/>
            <person name="Rabbinowitsch E."/>
            <person name="Steffen D."/>
            <person name="Sanders M."/>
            <person name="Ma J."/>
            <person name="Kohara Y."/>
            <person name="Sharp S."/>
            <person name="Simmonds M.N."/>
            <person name="Spiegler S."/>
            <person name="Tivey A."/>
            <person name="Sugano S."/>
            <person name="White B."/>
            <person name="Walker D."/>
            <person name="Woodward J.R."/>
            <person name="Winckler T."/>
            <person name="Tanaka Y."/>
            <person name="Shaulsky G."/>
            <person name="Schleicher M."/>
            <person name="Weinstock G.M."/>
            <person name="Rosenthal A."/>
            <person name="Cox E.C."/>
            <person name="Chisholm R.L."/>
            <person name="Gibbs R.A."/>
            <person name="Loomis W.F."/>
            <person name="Platzer M."/>
            <person name="Kay R.R."/>
            <person name="Williams J.G."/>
            <person name="Dear P.H."/>
            <person name="Noegel A.A."/>
            <person name="Barrell B.G."/>
            <person name="Kuspa A."/>
        </authorList>
    </citation>
    <scope>NUCLEOTIDE SEQUENCE [LARGE SCALE GENOMIC DNA]</scope>
    <source>
        <strain>AX4</strain>
    </source>
</reference>
<accession>Q55CT0</accession>
<dbReference type="EC" id="3.4.14.9"/>
<dbReference type="EMBL" id="AAFI02000005">
    <property type="protein sequence ID" value="EAL72307.1"/>
    <property type="molecule type" value="Genomic_DNA"/>
</dbReference>
<dbReference type="RefSeq" id="XP_646401.1">
    <property type="nucleotide sequence ID" value="XM_641309.1"/>
</dbReference>
<dbReference type="SMR" id="Q55CT0"/>
<dbReference type="FunCoup" id="Q55CT0">
    <property type="interactions" value="30"/>
</dbReference>
<dbReference type="STRING" id="44689.Q55CT0"/>
<dbReference type="MEROPS" id="S53.003"/>
<dbReference type="GlyCosmos" id="Q55CT0">
    <property type="glycosylation" value="5 sites, No reported glycans"/>
</dbReference>
<dbReference type="GlyGen" id="Q55CT0">
    <property type="glycosylation" value="6 sites"/>
</dbReference>
<dbReference type="PaxDb" id="44689-DDB0234303"/>
<dbReference type="EnsemblProtists" id="EAL72307">
    <property type="protein sequence ID" value="EAL72307"/>
    <property type="gene ID" value="DDB_G0269914"/>
</dbReference>
<dbReference type="GeneID" id="8617356"/>
<dbReference type="KEGG" id="ddi:DDB_G0269914"/>
<dbReference type="dictyBase" id="DDB_G0269914">
    <property type="gene designation" value="tpp1"/>
</dbReference>
<dbReference type="VEuPathDB" id="AmoebaDB:DDB_G0269914"/>
<dbReference type="eggNOG" id="ENOG502QR6D">
    <property type="taxonomic scope" value="Eukaryota"/>
</dbReference>
<dbReference type="HOGENOM" id="CLU_013783_5_1_1"/>
<dbReference type="InParanoid" id="Q55CT0"/>
<dbReference type="OMA" id="VTITPDC"/>
<dbReference type="PhylomeDB" id="Q55CT0"/>
<dbReference type="PRO" id="PR:Q55CT0"/>
<dbReference type="Proteomes" id="UP000002195">
    <property type="component" value="Chromosome 1"/>
</dbReference>
<dbReference type="GO" id="GO:0005576">
    <property type="term" value="C:extracellular region"/>
    <property type="evidence" value="ECO:0007669"/>
    <property type="project" value="UniProtKB-SubCell"/>
</dbReference>
<dbReference type="GO" id="GO:0005764">
    <property type="term" value="C:lysosome"/>
    <property type="evidence" value="ECO:0000314"/>
    <property type="project" value="dictyBase"/>
</dbReference>
<dbReference type="GO" id="GO:0004175">
    <property type="term" value="F:endopeptidase activity"/>
    <property type="evidence" value="ECO:0000318"/>
    <property type="project" value="GO_Central"/>
</dbReference>
<dbReference type="GO" id="GO:0046872">
    <property type="term" value="F:metal ion binding"/>
    <property type="evidence" value="ECO:0007669"/>
    <property type="project" value="UniProtKB-KW"/>
</dbReference>
<dbReference type="GO" id="GO:0004252">
    <property type="term" value="F:serine-type endopeptidase activity"/>
    <property type="evidence" value="ECO:0007669"/>
    <property type="project" value="InterPro"/>
</dbReference>
<dbReference type="GO" id="GO:0008240">
    <property type="term" value="F:tripeptidyl-peptidase activity"/>
    <property type="evidence" value="ECO:0000315"/>
    <property type="project" value="dictyBase"/>
</dbReference>
<dbReference type="GO" id="GO:0019954">
    <property type="term" value="P:asexual reproduction"/>
    <property type="evidence" value="ECO:0000315"/>
    <property type="project" value="dictyBase"/>
</dbReference>
<dbReference type="GO" id="GO:0044351">
    <property type="term" value="P:macropinocytosis"/>
    <property type="evidence" value="ECO:0000315"/>
    <property type="project" value="dictyBase"/>
</dbReference>
<dbReference type="GO" id="GO:0006909">
    <property type="term" value="P:phagocytosis"/>
    <property type="evidence" value="ECO:0000315"/>
    <property type="project" value="dictyBase"/>
</dbReference>
<dbReference type="GO" id="GO:0006508">
    <property type="term" value="P:proteolysis"/>
    <property type="evidence" value="ECO:0000250"/>
    <property type="project" value="dictyBase"/>
</dbReference>
<dbReference type="GO" id="GO:1902349">
    <property type="term" value="P:response to chloroquine"/>
    <property type="evidence" value="ECO:0000315"/>
    <property type="project" value="dictyBase"/>
</dbReference>
<dbReference type="GO" id="GO:0030587">
    <property type="term" value="P:sorocarp development"/>
    <property type="evidence" value="ECO:0000315"/>
    <property type="project" value="dictyBase"/>
</dbReference>
<dbReference type="CDD" id="cd04056">
    <property type="entry name" value="Peptidases_S53"/>
    <property type="match status" value="1"/>
</dbReference>
<dbReference type="CDD" id="cd11377">
    <property type="entry name" value="Pro-peptidase_S53"/>
    <property type="match status" value="1"/>
</dbReference>
<dbReference type="FunFam" id="3.40.50.200:FF:000047">
    <property type="entry name" value="Dipeptidyl aminopeptidase"/>
    <property type="match status" value="1"/>
</dbReference>
<dbReference type="Gene3D" id="3.40.50.200">
    <property type="entry name" value="Peptidase S8/S53 domain"/>
    <property type="match status" value="1"/>
</dbReference>
<dbReference type="InterPro" id="IPR000209">
    <property type="entry name" value="Peptidase_S8/S53_dom"/>
</dbReference>
<dbReference type="InterPro" id="IPR036852">
    <property type="entry name" value="Peptidase_S8/S53_dom_sf"/>
</dbReference>
<dbReference type="InterPro" id="IPR023828">
    <property type="entry name" value="Peptidase_S8_Ser-AS"/>
</dbReference>
<dbReference type="InterPro" id="IPR015366">
    <property type="entry name" value="S53_propep"/>
</dbReference>
<dbReference type="InterPro" id="IPR030400">
    <property type="entry name" value="Sedolisin_dom"/>
</dbReference>
<dbReference type="InterPro" id="IPR050819">
    <property type="entry name" value="Tripeptidyl-peptidase_I"/>
</dbReference>
<dbReference type="PANTHER" id="PTHR14218">
    <property type="entry name" value="PROTEASE S8 TRIPEPTIDYL PEPTIDASE I CLN2"/>
    <property type="match status" value="1"/>
</dbReference>
<dbReference type="PANTHER" id="PTHR14218:SF14">
    <property type="entry name" value="TRIPEPTIDYL-PEPTIDASE 1"/>
    <property type="match status" value="1"/>
</dbReference>
<dbReference type="Pfam" id="PF00082">
    <property type="entry name" value="Peptidase_S8"/>
    <property type="match status" value="1"/>
</dbReference>
<dbReference type="Pfam" id="PF09286">
    <property type="entry name" value="Pro-kuma_activ"/>
    <property type="match status" value="1"/>
</dbReference>
<dbReference type="SMART" id="SM00944">
    <property type="entry name" value="Pro-kuma_activ"/>
    <property type="match status" value="1"/>
</dbReference>
<dbReference type="SUPFAM" id="SSF54897">
    <property type="entry name" value="Protease propeptides/inhibitors"/>
    <property type="match status" value="1"/>
</dbReference>
<dbReference type="SUPFAM" id="SSF52743">
    <property type="entry name" value="Subtilisin-like"/>
    <property type="match status" value="1"/>
</dbReference>
<dbReference type="PROSITE" id="PS51695">
    <property type="entry name" value="SEDOLISIN"/>
    <property type="match status" value="1"/>
</dbReference>
<keyword id="KW-0068">Autocatalytic cleavage</keyword>
<keyword id="KW-0106">Calcium</keyword>
<keyword id="KW-1015">Disulfide bond</keyword>
<keyword id="KW-0325">Glycoprotein</keyword>
<keyword id="KW-0378">Hydrolase</keyword>
<keyword id="KW-0479">Metal-binding</keyword>
<keyword id="KW-0645">Protease</keyword>
<keyword id="KW-1185">Reference proteome</keyword>
<keyword id="KW-0964">Secreted</keyword>
<keyword id="KW-0720">Serine protease</keyword>
<keyword id="KW-0732">Signal</keyword>
<keyword id="KW-0865">Zymogen</keyword>
<sequence length="600" mass="67296">MNIKFNLIIIILFILFISNVNCKKIKNKKHLTPQRLRRFVEHSKPISLNKKVWKITEIENIFSAQIELTFGIRQRNIVELEDFVWRVSDPNDSLYGSYKTFEEIKEWVKPLDESIDAVKNWLIENDINEFTVTKSGDFIRTIVSIDKAEELLSVRYNKMVHKLSKQSFFRSLDPYTIPRELYDHIDFIGGVNHLPLLSPRPKESSGSAGGGGGGKVNGIGYELESLRNNKQIKSFNDKKVAARNGDPYLSPDLIRKEMNVSQTSTNSTHLGNSQAIAQFLKEYFSPSDLKIFQYRFGLEPSQVDNIIGPNQNLNPGIETALDIQYIMAMAPDVPTWIVSTGGLHEGQEPFLDWLVDLSSNPKLPLVHSISYGDDESSIGLAYTDRVDTEFKKYAAMGRTIVFSSGDFGVGCNDDCDSFSPGWPASSRFVLAVGGVIKKKDGSIIGDEISGGGFSNYFSRPWYQVDECSSYIEWLNGSLSSFYNQSGRGFPDISSFSENVVILYKDKLMPIGGTSASAPIIAGLLSLINDQRLQKNQSPIGLFNPLLYKIARDHPNSFLDIDFGENNYKCCTNGFKSKSGWDPVTGLGLPNFDELVKYCLE</sequence>
<protein>
    <recommendedName>
        <fullName>Tripeptidyl-peptidase 1</fullName>
        <shortName>TPP-1</shortName>
        <ecNumber>3.4.14.9</ecNumber>
    </recommendedName>
    <alternativeName>
        <fullName>Tripeptidyl aminopeptidase</fullName>
    </alternativeName>
    <alternativeName>
        <fullName>Tripeptidyl-peptidase I</fullName>
        <shortName>TPP-I</shortName>
    </alternativeName>
</protein>
<name>TPP1_DICDI</name>
<feature type="signal peptide" evidence="2">
    <location>
        <begin position="1"/>
        <end position="22"/>
    </location>
</feature>
<feature type="propeptide" id="PRO_0000327570" description="Removed in mature form" evidence="1">
    <location>
        <begin position="23"/>
        <end position="220"/>
    </location>
</feature>
<feature type="chain" id="PRO_0000327571" description="Tripeptidyl-peptidase 1">
    <location>
        <begin position="221"/>
        <end position="600"/>
    </location>
</feature>
<feature type="domain" description="Peptidase S53">
    <location>
        <begin position="248"/>
        <end position="600"/>
    </location>
</feature>
<feature type="active site" description="Charge relay system" evidence="1">
    <location>
        <position position="318"/>
    </location>
</feature>
<feature type="active site" description="Charge relay system" evidence="1">
    <location>
        <position position="322"/>
    </location>
</feature>
<feature type="active site" description="Charge relay system" evidence="1">
    <location>
        <position position="514"/>
    </location>
</feature>
<feature type="binding site" evidence="1">
    <location>
        <position position="559"/>
    </location>
    <ligand>
        <name>Ca(2+)</name>
        <dbReference type="ChEBI" id="CHEBI:29108"/>
    </ligand>
</feature>
<feature type="binding site" evidence="1">
    <location>
        <position position="560"/>
    </location>
    <ligand>
        <name>Ca(2+)</name>
        <dbReference type="ChEBI" id="CHEBI:29108"/>
    </ligand>
</feature>
<feature type="binding site" evidence="1">
    <location>
        <position position="579"/>
    </location>
    <ligand>
        <name>Ca(2+)</name>
        <dbReference type="ChEBI" id="CHEBI:29108"/>
    </ligand>
</feature>
<feature type="binding site" evidence="1">
    <location>
        <position position="581"/>
    </location>
    <ligand>
        <name>Ca(2+)</name>
        <dbReference type="ChEBI" id="CHEBI:29108"/>
    </ligand>
</feature>
<feature type="glycosylation site" description="N-linked (GlcNAc...) asparagine" evidence="2">
    <location>
        <position position="91"/>
    </location>
</feature>
<feature type="glycosylation site" description="N-linked (GlcNAc...) asparagine" evidence="2">
    <location>
        <position position="259"/>
    </location>
</feature>
<feature type="glycosylation site" description="N-linked (GlcNAc...) asparagine" evidence="2">
    <location>
        <position position="266"/>
    </location>
</feature>
<feature type="glycosylation site" description="N-linked (GlcNAc...) asparagine" evidence="2">
    <location>
        <position position="475"/>
    </location>
</feature>
<feature type="glycosylation site" description="N-linked (GlcNAc...) asparagine" evidence="2">
    <location>
        <position position="483"/>
    </location>
</feature>
<feature type="disulfide bond" evidence="1">
    <location>
        <begin position="411"/>
        <end position="570"/>
    </location>
</feature>
<comment type="function">
    <text evidence="1">Serine protease with tripeptidyl-peptidase I activity.</text>
</comment>
<comment type="catalytic activity">
    <reaction>
        <text>Release of an N-terminal tripeptide from a polypeptide, but also has endopeptidase activity.</text>
        <dbReference type="EC" id="3.4.14.9"/>
    </reaction>
</comment>
<comment type="cofactor">
    <cofactor evidence="1">
        <name>Ca(2+)</name>
        <dbReference type="ChEBI" id="CHEBI:29108"/>
    </cofactor>
    <text evidence="1">Binds 1 Ca(2+) ion per subunit.</text>
</comment>
<comment type="subunit">
    <text evidence="1">Monomer.</text>
</comment>
<comment type="subcellular location">
    <subcellularLocation>
        <location evidence="3">Secreted</location>
    </subcellularLocation>
</comment>
<comment type="PTM">
    <text evidence="1">Activated by autocatalytic proteolytical processing upon acidification. N-glycosylation is required for processing and activity (By similarity).</text>
</comment>
<proteinExistence type="inferred from homology"/>
<gene>
    <name type="primary">tpp1</name>
    <name type="ORF">DDB_G0269914</name>
</gene>